<sequence length="411" mass="45705">MSDSVILALGIAAFTVIVLVLVAIILFAKSKLVDSGDITIDINDDPEKAITLPAGGKLLGALASKGIFVSSACGGGGSCGQCIVKVKNGGGEILPTELSHINKREAKEGYRLACQVNVKGNMEVELPEEIFGVKKWECTVISNDNKATFIKELKLAIPEGEEVPFRAGGYIQIEAEPHVVNYKDFDIPEEYHEDWDKYDLWRYVSKVDEHIIRAYSMASYPEEKGIIMLNVRIATPPPRQPDAPPGQMSSYIWSLKAGDKVTISGPFGEFFAKETDAEMVFIGGGAGMAPMRSHIFDQLKRLHSKRKMSFWYGARSKREIFYQEDFDQLQAENPNFVWHVALSDALPEDNWTGYTGFIHNVLYENYLKNHEAPEDCEYYMCGPPVMNAAVIKMLKDLGVEDENILLDDFGG</sequence>
<proteinExistence type="inferred from homology"/>
<organism>
    <name type="scientific">Haemophilus influenzae (strain ATCC 51907 / DSM 11121 / KW20 / Rd)</name>
    <dbReference type="NCBI Taxonomy" id="71421"/>
    <lineage>
        <taxon>Bacteria</taxon>
        <taxon>Pseudomonadati</taxon>
        <taxon>Pseudomonadota</taxon>
        <taxon>Gammaproteobacteria</taxon>
        <taxon>Pasteurellales</taxon>
        <taxon>Pasteurellaceae</taxon>
        <taxon>Haemophilus</taxon>
    </lineage>
</organism>
<name>NQRF_HAEIN</name>
<evidence type="ECO:0000255" key="1">
    <source>
        <dbReference type="HAMAP-Rule" id="MF_00430"/>
    </source>
</evidence>
<reference key="1">
    <citation type="journal article" date="1995" name="Science">
        <title>Whole-genome random sequencing and assembly of Haemophilus influenzae Rd.</title>
        <authorList>
            <person name="Fleischmann R.D."/>
            <person name="Adams M.D."/>
            <person name="White O."/>
            <person name="Clayton R.A."/>
            <person name="Kirkness E.F."/>
            <person name="Kerlavage A.R."/>
            <person name="Bult C.J."/>
            <person name="Tomb J.-F."/>
            <person name="Dougherty B.A."/>
            <person name="Merrick J.M."/>
            <person name="McKenney K."/>
            <person name="Sutton G.G."/>
            <person name="FitzHugh W."/>
            <person name="Fields C.A."/>
            <person name="Gocayne J.D."/>
            <person name="Scott J.D."/>
            <person name="Shirley R."/>
            <person name="Liu L.-I."/>
            <person name="Glodek A."/>
            <person name="Kelley J.M."/>
            <person name="Weidman J.F."/>
            <person name="Phillips C.A."/>
            <person name="Spriggs T."/>
            <person name="Hedblom E."/>
            <person name="Cotton M.D."/>
            <person name="Utterback T.R."/>
            <person name="Hanna M.C."/>
            <person name="Nguyen D.T."/>
            <person name="Saudek D.M."/>
            <person name="Brandon R.C."/>
            <person name="Fine L.D."/>
            <person name="Fritchman J.L."/>
            <person name="Fuhrmann J.L."/>
            <person name="Geoghagen N.S.M."/>
            <person name="Gnehm C.L."/>
            <person name="McDonald L.A."/>
            <person name="Small K.V."/>
            <person name="Fraser C.M."/>
            <person name="Smith H.O."/>
            <person name="Venter J.C."/>
        </authorList>
    </citation>
    <scope>NUCLEOTIDE SEQUENCE [LARGE SCALE GENOMIC DNA]</scope>
    <source>
        <strain>ATCC 51907 / DSM 11121 / KW20 / Rd</strain>
    </source>
</reference>
<reference key="2">
    <citation type="journal article" date="1996" name="FEBS Lett.">
        <title>Existence of Na+-translocating NADH-quinone reductase in Haemophilus influenzae.</title>
        <authorList>
            <person name="Hayashi M."/>
            <person name="Nakayama Y."/>
            <person name="Unemoto T."/>
        </authorList>
    </citation>
    <scope>IDENTIFICATION AS NQR SYSTEM</scope>
    <source>
        <strain>ATCC 51907 / DSM 11121 / KW20 / Rd</strain>
    </source>
</reference>
<dbReference type="EC" id="7.2.1.1" evidence="1"/>
<dbReference type="EMBL" id="L42023">
    <property type="protein sequence ID" value="AAC21841.1"/>
    <property type="molecule type" value="Genomic_DNA"/>
</dbReference>
<dbReference type="PIR" id="D64052">
    <property type="entry name" value="D64052"/>
</dbReference>
<dbReference type="RefSeq" id="NP_438339.1">
    <property type="nucleotide sequence ID" value="NC_000907.1"/>
</dbReference>
<dbReference type="SMR" id="O05012"/>
<dbReference type="STRING" id="71421.HI_0171"/>
<dbReference type="EnsemblBacteria" id="AAC21841">
    <property type="protein sequence ID" value="AAC21841"/>
    <property type="gene ID" value="HI_0171"/>
</dbReference>
<dbReference type="KEGG" id="hin:HI_0171"/>
<dbReference type="PATRIC" id="fig|71421.8.peg.175"/>
<dbReference type="eggNOG" id="COG2871">
    <property type="taxonomic scope" value="Bacteria"/>
</dbReference>
<dbReference type="HOGENOM" id="CLU_003827_7_2_6"/>
<dbReference type="OrthoDB" id="9806195at2"/>
<dbReference type="PhylomeDB" id="O05012"/>
<dbReference type="BioCyc" id="HINF71421:G1GJ1-181-MONOMER"/>
<dbReference type="Proteomes" id="UP000000579">
    <property type="component" value="Chromosome"/>
</dbReference>
<dbReference type="GO" id="GO:0005886">
    <property type="term" value="C:plasma membrane"/>
    <property type="evidence" value="ECO:0007669"/>
    <property type="project" value="UniProtKB-SubCell"/>
</dbReference>
<dbReference type="GO" id="GO:0051537">
    <property type="term" value="F:2 iron, 2 sulfur cluster binding"/>
    <property type="evidence" value="ECO:0007669"/>
    <property type="project" value="UniProtKB-KW"/>
</dbReference>
<dbReference type="GO" id="GO:0009055">
    <property type="term" value="F:electron transfer activity"/>
    <property type="evidence" value="ECO:0007669"/>
    <property type="project" value="UniProtKB-UniRule"/>
</dbReference>
<dbReference type="GO" id="GO:0046872">
    <property type="term" value="F:metal ion binding"/>
    <property type="evidence" value="ECO:0007669"/>
    <property type="project" value="UniProtKB-KW"/>
</dbReference>
<dbReference type="GO" id="GO:0016655">
    <property type="term" value="F:oxidoreductase activity, acting on NAD(P)H, quinone or similar compound as acceptor"/>
    <property type="evidence" value="ECO:0007669"/>
    <property type="project" value="InterPro"/>
</dbReference>
<dbReference type="GO" id="GO:0006814">
    <property type="term" value="P:sodium ion transport"/>
    <property type="evidence" value="ECO:0007669"/>
    <property type="project" value="UniProtKB-UniRule"/>
</dbReference>
<dbReference type="CDD" id="cd06188">
    <property type="entry name" value="NADH_quinone_reductase"/>
    <property type="match status" value="1"/>
</dbReference>
<dbReference type="FunFam" id="2.40.30.10:FF:000064">
    <property type="entry name" value="Na(+)-translocating NADH-quinone reductase subunit F"/>
    <property type="match status" value="1"/>
</dbReference>
<dbReference type="FunFam" id="3.40.50.80:FF:000014">
    <property type="entry name" value="Na(+)-translocating NADH-quinone reductase subunit F"/>
    <property type="match status" value="1"/>
</dbReference>
<dbReference type="Gene3D" id="3.10.20.30">
    <property type="match status" value="1"/>
</dbReference>
<dbReference type="Gene3D" id="3.40.50.80">
    <property type="entry name" value="Nucleotide-binding domain of ferredoxin-NADP reductase (FNR) module"/>
    <property type="match status" value="1"/>
</dbReference>
<dbReference type="Gene3D" id="2.40.30.10">
    <property type="entry name" value="Translation factors"/>
    <property type="match status" value="1"/>
</dbReference>
<dbReference type="HAMAP" id="MF_00430">
    <property type="entry name" value="NqrF"/>
    <property type="match status" value="1"/>
</dbReference>
<dbReference type="InterPro" id="IPR036010">
    <property type="entry name" value="2Fe-2S_ferredoxin-like_sf"/>
</dbReference>
<dbReference type="InterPro" id="IPR001041">
    <property type="entry name" value="2Fe-2S_ferredoxin-type"/>
</dbReference>
<dbReference type="InterPro" id="IPR012675">
    <property type="entry name" value="Beta-grasp_dom_sf"/>
</dbReference>
<dbReference type="InterPro" id="IPR008333">
    <property type="entry name" value="Cbr1-like_FAD-bd_dom"/>
</dbReference>
<dbReference type="InterPro" id="IPR017927">
    <property type="entry name" value="FAD-bd_FR_type"/>
</dbReference>
<dbReference type="InterPro" id="IPR001709">
    <property type="entry name" value="Flavoprot_Pyr_Nucl_cyt_Rdtase"/>
</dbReference>
<dbReference type="InterPro" id="IPR039261">
    <property type="entry name" value="FNR_nucleotide-bd"/>
</dbReference>
<dbReference type="InterPro" id="IPR010205">
    <property type="entry name" value="NqrF"/>
</dbReference>
<dbReference type="InterPro" id="IPR001433">
    <property type="entry name" value="OxRdtase_FAD/NAD-bd"/>
</dbReference>
<dbReference type="InterPro" id="IPR017938">
    <property type="entry name" value="Riboflavin_synthase-like_b-brl"/>
</dbReference>
<dbReference type="NCBIfam" id="TIGR01941">
    <property type="entry name" value="nqrF"/>
    <property type="match status" value="1"/>
</dbReference>
<dbReference type="PANTHER" id="PTHR43644">
    <property type="entry name" value="NA(+)-TRANSLOCATING NADH-QUINONE REDUCTASE SUBUNIT"/>
    <property type="match status" value="1"/>
</dbReference>
<dbReference type="PANTHER" id="PTHR43644:SF1">
    <property type="entry name" value="NAD(P)H-FLAVIN REDUCTASE"/>
    <property type="match status" value="1"/>
</dbReference>
<dbReference type="Pfam" id="PF00970">
    <property type="entry name" value="FAD_binding_6"/>
    <property type="match status" value="1"/>
</dbReference>
<dbReference type="Pfam" id="PF00111">
    <property type="entry name" value="Fer2"/>
    <property type="match status" value="1"/>
</dbReference>
<dbReference type="Pfam" id="PF00175">
    <property type="entry name" value="NAD_binding_1"/>
    <property type="match status" value="1"/>
</dbReference>
<dbReference type="PIRSF" id="PIRSF000044">
    <property type="entry name" value="Cis_Diol_DH_RD"/>
    <property type="match status" value="1"/>
</dbReference>
<dbReference type="PRINTS" id="PR00371">
    <property type="entry name" value="FPNCR"/>
</dbReference>
<dbReference type="SUPFAM" id="SSF54292">
    <property type="entry name" value="2Fe-2S ferredoxin-like"/>
    <property type="match status" value="1"/>
</dbReference>
<dbReference type="SUPFAM" id="SSF52343">
    <property type="entry name" value="Ferredoxin reductase-like, C-terminal NADP-linked domain"/>
    <property type="match status" value="1"/>
</dbReference>
<dbReference type="SUPFAM" id="SSF63380">
    <property type="entry name" value="Riboflavin synthase domain-like"/>
    <property type="match status" value="1"/>
</dbReference>
<dbReference type="PROSITE" id="PS51085">
    <property type="entry name" value="2FE2S_FER_2"/>
    <property type="match status" value="1"/>
</dbReference>
<dbReference type="PROSITE" id="PS51384">
    <property type="entry name" value="FAD_FR"/>
    <property type="match status" value="1"/>
</dbReference>
<keyword id="KW-0001">2Fe-2S</keyword>
<keyword id="KW-0997">Cell inner membrane</keyword>
<keyword id="KW-1003">Cell membrane</keyword>
<keyword id="KW-0274">FAD</keyword>
<keyword id="KW-0285">Flavoprotein</keyword>
<keyword id="KW-0406">Ion transport</keyword>
<keyword id="KW-0408">Iron</keyword>
<keyword id="KW-0411">Iron-sulfur</keyword>
<keyword id="KW-0472">Membrane</keyword>
<keyword id="KW-0479">Metal-binding</keyword>
<keyword id="KW-0520">NAD</keyword>
<keyword id="KW-1185">Reference proteome</keyword>
<keyword id="KW-0915">Sodium</keyword>
<keyword id="KW-0739">Sodium transport</keyword>
<keyword id="KW-1278">Translocase</keyword>
<keyword id="KW-0812">Transmembrane</keyword>
<keyword id="KW-1133">Transmembrane helix</keyword>
<keyword id="KW-0813">Transport</keyword>
<keyword id="KW-0830">Ubiquinone</keyword>
<comment type="function">
    <text evidence="1">NQR complex catalyzes the reduction of ubiquinone-1 to ubiquinol by two successive reactions, coupled with the transport of Na(+) ions from the cytoplasm to the periplasm. The first step is catalyzed by NqrF, which accepts electrons from NADH and reduces ubiquinone-1 to ubisemiquinone by a one-electron transfer pathway.</text>
</comment>
<comment type="catalytic activity">
    <reaction evidence="1">
        <text>a ubiquinone + n Na(+)(in) + NADH + H(+) = a ubiquinol + n Na(+)(out) + NAD(+)</text>
        <dbReference type="Rhea" id="RHEA:47748"/>
        <dbReference type="Rhea" id="RHEA-COMP:9565"/>
        <dbReference type="Rhea" id="RHEA-COMP:9566"/>
        <dbReference type="ChEBI" id="CHEBI:15378"/>
        <dbReference type="ChEBI" id="CHEBI:16389"/>
        <dbReference type="ChEBI" id="CHEBI:17976"/>
        <dbReference type="ChEBI" id="CHEBI:29101"/>
        <dbReference type="ChEBI" id="CHEBI:57540"/>
        <dbReference type="ChEBI" id="CHEBI:57945"/>
        <dbReference type="EC" id="7.2.1.1"/>
    </reaction>
</comment>
<comment type="cofactor">
    <cofactor evidence="1">
        <name>[2Fe-2S] cluster</name>
        <dbReference type="ChEBI" id="CHEBI:190135"/>
    </cofactor>
    <text evidence="1">Binds 1 [2Fe-2S] cluster.</text>
</comment>
<comment type="cofactor">
    <cofactor evidence="1">
        <name>FAD</name>
        <dbReference type="ChEBI" id="CHEBI:57692"/>
    </cofactor>
</comment>
<comment type="subunit">
    <text evidence="1">Composed of six subunits; NqrA, NqrB, NqrC, NqrD, NqrE and NqrF.</text>
</comment>
<comment type="subcellular location">
    <subcellularLocation>
        <location evidence="1">Cell inner membrane</location>
        <topology evidence="1">Single-pass membrane protein</topology>
    </subcellularLocation>
</comment>
<comment type="similarity">
    <text evidence="1">Belongs to the NqrF family.</text>
</comment>
<feature type="chain" id="PRO_0000074496" description="Na(+)-translocating NADH-quinone reductase subunit F">
    <location>
        <begin position="1"/>
        <end position="411"/>
    </location>
</feature>
<feature type="transmembrane region" description="Helical" evidence="1">
    <location>
        <begin position="5"/>
        <end position="25"/>
    </location>
</feature>
<feature type="domain" description="2Fe-2S ferredoxin-type" evidence="1">
    <location>
        <begin position="36"/>
        <end position="130"/>
    </location>
</feature>
<feature type="domain" description="FAD-binding FR-type" evidence="1">
    <location>
        <begin position="133"/>
        <end position="273"/>
    </location>
</feature>
<feature type="region of interest" description="Catalytic">
    <location>
        <begin position="276"/>
        <end position="393"/>
    </location>
</feature>
<feature type="binding site" evidence="1">
    <location>
        <position position="73"/>
    </location>
    <ligand>
        <name>[2Fe-2S] cluster</name>
        <dbReference type="ChEBI" id="CHEBI:190135"/>
    </ligand>
</feature>
<feature type="binding site" evidence="1">
    <location>
        <position position="79"/>
    </location>
    <ligand>
        <name>[2Fe-2S] cluster</name>
        <dbReference type="ChEBI" id="CHEBI:190135"/>
    </ligand>
</feature>
<feature type="binding site" evidence="1">
    <location>
        <position position="82"/>
    </location>
    <ligand>
        <name>[2Fe-2S] cluster</name>
        <dbReference type="ChEBI" id="CHEBI:190135"/>
    </ligand>
</feature>
<feature type="binding site" evidence="1">
    <location>
        <position position="114"/>
    </location>
    <ligand>
        <name>[2Fe-2S] cluster</name>
        <dbReference type="ChEBI" id="CHEBI:190135"/>
    </ligand>
</feature>
<protein>
    <recommendedName>
        <fullName evidence="1">Na(+)-translocating NADH-quinone reductase subunit F</fullName>
        <shortName evidence="1">Na(+)-NQR subunit F</shortName>
        <shortName evidence="1">Na(+)-translocating NQR subunit F</shortName>
        <ecNumber evidence="1">7.2.1.1</ecNumber>
    </recommendedName>
    <alternativeName>
        <fullName evidence="1">NQR complex subunit F</fullName>
    </alternativeName>
    <alternativeName>
        <fullName evidence="1">NQR-1 subunit F</fullName>
    </alternativeName>
</protein>
<gene>
    <name evidence="1" type="primary">nqrF</name>
    <name type="ordered locus">HI_0171</name>
</gene>
<accession>O05012</accession>